<reference key="1">
    <citation type="submission" date="2002-12" db="EMBL/GenBank/DDBJ databases">
        <title>Complete genome sequence of Vibrio vulnificus CMCP6.</title>
        <authorList>
            <person name="Rhee J.H."/>
            <person name="Kim S.Y."/>
            <person name="Chung S.S."/>
            <person name="Kim J.J."/>
            <person name="Moon Y.H."/>
            <person name="Jeong H."/>
            <person name="Choy H.E."/>
        </authorList>
    </citation>
    <scope>NUCLEOTIDE SEQUENCE [LARGE SCALE GENOMIC DNA]</scope>
    <source>
        <strain>CMCP6</strain>
    </source>
</reference>
<accession>Q8DCM0</accession>
<sequence length="363" mass="39493">MERITVNLAERSYPITIGAGLFEDSAHLSSLTAGQKVVVITNVTVAPLYADKILSLLQSLGCQASLLELPDGEQYKSLDTFNQVMSFLLEGSFARDVVVIALGGGVIGDLVGFSAACYQRGVDFIQIPTTLLSQVDSSVGGKTAVNHPLGKNMIGAFYQPKSVIIDTNCLKTLPEREFAAGIAEVIKYGIIYDAEFFTWLDEHLDALYSLDEQALTYAIARCCEIKAEVVAQDEKESGIRALLNLGHTFGHAIEAELGYGNWLHGEAVAAGTVMAARTAQLQGMIDQQQFDKIFSILSRAKLPVHTPESMTFDDFMTHMMRDKKVLSGKLRLVLPSSIGTAEVVADVPQEVIRQAIEDCRTIN</sequence>
<proteinExistence type="inferred from homology"/>
<keyword id="KW-0028">Amino-acid biosynthesis</keyword>
<keyword id="KW-0057">Aromatic amino acid biosynthesis</keyword>
<keyword id="KW-0170">Cobalt</keyword>
<keyword id="KW-0963">Cytoplasm</keyword>
<keyword id="KW-0456">Lyase</keyword>
<keyword id="KW-0479">Metal-binding</keyword>
<keyword id="KW-0520">NAD</keyword>
<keyword id="KW-0547">Nucleotide-binding</keyword>
<keyword id="KW-0862">Zinc</keyword>
<organism>
    <name type="scientific">Vibrio vulnificus (strain CMCP6)</name>
    <dbReference type="NCBI Taxonomy" id="216895"/>
    <lineage>
        <taxon>Bacteria</taxon>
        <taxon>Pseudomonadati</taxon>
        <taxon>Pseudomonadota</taxon>
        <taxon>Gammaproteobacteria</taxon>
        <taxon>Vibrionales</taxon>
        <taxon>Vibrionaceae</taxon>
        <taxon>Vibrio</taxon>
    </lineage>
</organism>
<comment type="function">
    <text evidence="1">Catalyzes the conversion of 3-deoxy-D-arabino-heptulosonate 7-phosphate (DAHP) to dehydroquinate (DHQ).</text>
</comment>
<comment type="catalytic activity">
    <reaction evidence="1">
        <text>7-phospho-2-dehydro-3-deoxy-D-arabino-heptonate = 3-dehydroquinate + phosphate</text>
        <dbReference type="Rhea" id="RHEA:21968"/>
        <dbReference type="ChEBI" id="CHEBI:32364"/>
        <dbReference type="ChEBI" id="CHEBI:43474"/>
        <dbReference type="ChEBI" id="CHEBI:58394"/>
        <dbReference type="EC" id="4.2.3.4"/>
    </reaction>
</comment>
<comment type="cofactor">
    <cofactor evidence="1">
        <name>NAD(+)</name>
        <dbReference type="ChEBI" id="CHEBI:57540"/>
    </cofactor>
</comment>
<comment type="cofactor">
    <cofactor evidence="1">
        <name>Co(2+)</name>
        <dbReference type="ChEBI" id="CHEBI:48828"/>
    </cofactor>
    <cofactor evidence="1">
        <name>Zn(2+)</name>
        <dbReference type="ChEBI" id="CHEBI:29105"/>
    </cofactor>
    <text evidence="1">Binds 1 divalent metal cation per subunit. Can use either Co(2+) or Zn(2+).</text>
</comment>
<comment type="pathway">
    <text evidence="1">Metabolic intermediate biosynthesis; chorismate biosynthesis; chorismate from D-erythrose 4-phosphate and phosphoenolpyruvate: step 2/7.</text>
</comment>
<comment type="subcellular location">
    <subcellularLocation>
        <location evidence="1">Cytoplasm</location>
    </subcellularLocation>
</comment>
<comment type="similarity">
    <text evidence="1">Belongs to the sugar phosphate cyclases superfamily. Dehydroquinate synthase family.</text>
</comment>
<dbReference type="EC" id="4.2.3.4" evidence="1"/>
<dbReference type="EMBL" id="AE016795">
    <property type="protein sequence ID" value="AAO09832.1"/>
    <property type="molecule type" value="Genomic_DNA"/>
</dbReference>
<dbReference type="RefSeq" id="WP_011079358.1">
    <property type="nucleotide sequence ID" value="NC_004459.3"/>
</dbReference>
<dbReference type="SMR" id="Q8DCM0"/>
<dbReference type="GeneID" id="93895647"/>
<dbReference type="KEGG" id="vvu:VV1_1383"/>
<dbReference type="HOGENOM" id="CLU_001201_0_2_6"/>
<dbReference type="UniPathway" id="UPA00053">
    <property type="reaction ID" value="UER00085"/>
</dbReference>
<dbReference type="Proteomes" id="UP000002275">
    <property type="component" value="Chromosome 1"/>
</dbReference>
<dbReference type="GO" id="GO:0005737">
    <property type="term" value="C:cytoplasm"/>
    <property type="evidence" value="ECO:0007669"/>
    <property type="project" value="UniProtKB-SubCell"/>
</dbReference>
<dbReference type="GO" id="GO:0003856">
    <property type="term" value="F:3-dehydroquinate synthase activity"/>
    <property type="evidence" value="ECO:0007669"/>
    <property type="project" value="UniProtKB-UniRule"/>
</dbReference>
<dbReference type="GO" id="GO:0046872">
    <property type="term" value="F:metal ion binding"/>
    <property type="evidence" value="ECO:0007669"/>
    <property type="project" value="UniProtKB-KW"/>
</dbReference>
<dbReference type="GO" id="GO:0000166">
    <property type="term" value="F:nucleotide binding"/>
    <property type="evidence" value="ECO:0007669"/>
    <property type="project" value="UniProtKB-KW"/>
</dbReference>
<dbReference type="GO" id="GO:0008652">
    <property type="term" value="P:amino acid biosynthetic process"/>
    <property type="evidence" value="ECO:0007669"/>
    <property type="project" value="UniProtKB-KW"/>
</dbReference>
<dbReference type="GO" id="GO:0009073">
    <property type="term" value="P:aromatic amino acid family biosynthetic process"/>
    <property type="evidence" value="ECO:0007669"/>
    <property type="project" value="UniProtKB-KW"/>
</dbReference>
<dbReference type="GO" id="GO:0009423">
    <property type="term" value="P:chorismate biosynthetic process"/>
    <property type="evidence" value="ECO:0007669"/>
    <property type="project" value="UniProtKB-UniRule"/>
</dbReference>
<dbReference type="CDD" id="cd08195">
    <property type="entry name" value="DHQS"/>
    <property type="match status" value="1"/>
</dbReference>
<dbReference type="FunFam" id="1.20.1090.10:FF:000002">
    <property type="entry name" value="3-dehydroquinate synthase"/>
    <property type="match status" value="1"/>
</dbReference>
<dbReference type="FunFam" id="3.40.50.1970:FF:000001">
    <property type="entry name" value="3-dehydroquinate synthase"/>
    <property type="match status" value="1"/>
</dbReference>
<dbReference type="Gene3D" id="3.40.50.1970">
    <property type="match status" value="1"/>
</dbReference>
<dbReference type="Gene3D" id="1.20.1090.10">
    <property type="entry name" value="Dehydroquinate synthase-like - alpha domain"/>
    <property type="match status" value="1"/>
</dbReference>
<dbReference type="HAMAP" id="MF_00110">
    <property type="entry name" value="DHQ_synthase"/>
    <property type="match status" value="1"/>
</dbReference>
<dbReference type="InterPro" id="IPR050071">
    <property type="entry name" value="Dehydroquinate_synthase"/>
</dbReference>
<dbReference type="InterPro" id="IPR016037">
    <property type="entry name" value="DHQ_synth_AroB"/>
</dbReference>
<dbReference type="InterPro" id="IPR030963">
    <property type="entry name" value="DHQ_synth_fam"/>
</dbReference>
<dbReference type="InterPro" id="IPR030960">
    <property type="entry name" value="DHQS/DOIS_N"/>
</dbReference>
<dbReference type="InterPro" id="IPR056179">
    <property type="entry name" value="DHQS_C"/>
</dbReference>
<dbReference type="NCBIfam" id="TIGR01357">
    <property type="entry name" value="aroB"/>
    <property type="match status" value="1"/>
</dbReference>
<dbReference type="PANTHER" id="PTHR43622">
    <property type="entry name" value="3-DEHYDROQUINATE SYNTHASE"/>
    <property type="match status" value="1"/>
</dbReference>
<dbReference type="PANTHER" id="PTHR43622:SF7">
    <property type="entry name" value="3-DEHYDROQUINATE SYNTHASE, CHLOROPLASTIC"/>
    <property type="match status" value="1"/>
</dbReference>
<dbReference type="Pfam" id="PF01761">
    <property type="entry name" value="DHQ_synthase"/>
    <property type="match status" value="1"/>
</dbReference>
<dbReference type="Pfam" id="PF24621">
    <property type="entry name" value="DHQS_C"/>
    <property type="match status" value="1"/>
</dbReference>
<dbReference type="PIRSF" id="PIRSF001455">
    <property type="entry name" value="DHQ_synth"/>
    <property type="match status" value="1"/>
</dbReference>
<dbReference type="SUPFAM" id="SSF56796">
    <property type="entry name" value="Dehydroquinate synthase-like"/>
    <property type="match status" value="1"/>
</dbReference>
<gene>
    <name evidence="1" type="primary">aroB</name>
    <name type="ordered locus">VV1_1383</name>
</gene>
<name>AROB_VIBVU</name>
<feature type="chain" id="PRO_0000140806" description="3-dehydroquinate synthase">
    <location>
        <begin position="1"/>
        <end position="363"/>
    </location>
</feature>
<feature type="binding site" evidence="1">
    <location>
        <begin position="71"/>
        <end position="76"/>
    </location>
    <ligand>
        <name>NAD(+)</name>
        <dbReference type="ChEBI" id="CHEBI:57540"/>
    </ligand>
</feature>
<feature type="binding site" evidence="1">
    <location>
        <begin position="105"/>
        <end position="109"/>
    </location>
    <ligand>
        <name>NAD(+)</name>
        <dbReference type="ChEBI" id="CHEBI:57540"/>
    </ligand>
</feature>
<feature type="binding site" evidence="1">
    <location>
        <begin position="129"/>
        <end position="130"/>
    </location>
    <ligand>
        <name>NAD(+)</name>
        <dbReference type="ChEBI" id="CHEBI:57540"/>
    </ligand>
</feature>
<feature type="binding site" evidence="1">
    <location>
        <position position="142"/>
    </location>
    <ligand>
        <name>NAD(+)</name>
        <dbReference type="ChEBI" id="CHEBI:57540"/>
    </ligand>
</feature>
<feature type="binding site" evidence="1">
    <location>
        <position position="151"/>
    </location>
    <ligand>
        <name>NAD(+)</name>
        <dbReference type="ChEBI" id="CHEBI:57540"/>
    </ligand>
</feature>
<feature type="binding site" evidence="1">
    <location>
        <begin position="169"/>
        <end position="172"/>
    </location>
    <ligand>
        <name>NAD(+)</name>
        <dbReference type="ChEBI" id="CHEBI:57540"/>
    </ligand>
</feature>
<feature type="binding site" evidence="1">
    <location>
        <position position="184"/>
    </location>
    <ligand>
        <name>Zn(2+)</name>
        <dbReference type="ChEBI" id="CHEBI:29105"/>
    </ligand>
</feature>
<feature type="binding site" evidence="1">
    <location>
        <position position="247"/>
    </location>
    <ligand>
        <name>Zn(2+)</name>
        <dbReference type="ChEBI" id="CHEBI:29105"/>
    </ligand>
</feature>
<feature type="binding site" evidence="1">
    <location>
        <position position="264"/>
    </location>
    <ligand>
        <name>Zn(2+)</name>
        <dbReference type="ChEBI" id="CHEBI:29105"/>
    </ligand>
</feature>
<evidence type="ECO:0000255" key="1">
    <source>
        <dbReference type="HAMAP-Rule" id="MF_00110"/>
    </source>
</evidence>
<protein>
    <recommendedName>
        <fullName evidence="1">3-dehydroquinate synthase</fullName>
        <shortName evidence="1">DHQS</shortName>
        <ecNumber evidence="1">4.2.3.4</ecNumber>
    </recommendedName>
</protein>